<sequence length="503" mass="55280">MLKKFINSLWKLCQQDKYQRFTPIVDAIDTFCYEPIETPSKPPFIRDSVDVKRWMMLVVIALFPATFVAIWNSGLQSIVYSSGNPVLMEQFLHISGFGSYLSFVYKEIHIVPILWEGLKIFIPLLTISYVVGGTCEVLFAVVRGHKIAEGLLVTGILYPLTLPPTIPYWMAALGIAFGIVVSKELFGGTGMNILNPALSGRAFLFFTFPAKMSGDVWVGSNPGVIKDSLMKMNSSTGKVLIDGFSQSTCLQTLNSTPPSVKRLHVDAIAANMLHIPHVPTQDVIHSQFSLWTETHPGWVLDNLTLTQLQTFVTAPVAEGGLGLLPTQFDSAYAITDVIYGIGKFSAGNLFWGNIIGSLGETSTFACLLGAIFLIVTGIASWRTMAAFGIGAFLTGWLFKFISVLIVGQNGAWAPARFFIPAYRQLFLGGLAFGLVFMATDPVSSPTMKLGKWIYGFFIGFMTIVIRLINPAYPEGVMLAILLGNVFAPLIDYFAVRKYRKRGV</sequence>
<feature type="chain" id="PRO_0000074434" description="Na(+)-translocating NADH-quinone reductase subunit B">
    <location>
        <begin position="1"/>
        <end position="503"/>
    </location>
</feature>
<feature type="transmembrane region" description="Helical" evidence="1">
    <location>
        <begin position="55"/>
        <end position="75"/>
    </location>
</feature>
<feature type="transmembrane region" description="Helical" evidence="1">
    <location>
        <begin position="94"/>
        <end position="114"/>
    </location>
</feature>
<feature type="transmembrane region" description="Helical" evidence="1">
    <location>
        <begin position="120"/>
        <end position="140"/>
    </location>
</feature>
<feature type="transmembrane region" description="Helical" evidence="1">
    <location>
        <begin position="161"/>
        <end position="181"/>
    </location>
</feature>
<feature type="transmembrane region" description="Helical" evidence="1">
    <location>
        <begin position="186"/>
        <end position="206"/>
    </location>
</feature>
<feature type="transmembrane region" description="Helical" evidence="1">
    <location>
        <begin position="361"/>
        <end position="381"/>
    </location>
</feature>
<feature type="transmembrane region" description="Helical" evidence="1">
    <location>
        <begin position="386"/>
        <end position="406"/>
    </location>
</feature>
<feature type="transmembrane region" description="Helical" evidence="1">
    <location>
        <begin position="417"/>
        <end position="437"/>
    </location>
</feature>
<feature type="transmembrane region" description="Helical" evidence="1">
    <location>
        <begin position="452"/>
        <end position="472"/>
    </location>
</feature>
<feature type="transmembrane region" description="Helical" evidence="1">
    <location>
        <begin position="475"/>
        <end position="495"/>
    </location>
</feature>
<feature type="modified residue" description="FMN phosphoryl threonine" evidence="1">
    <location>
        <position position="248"/>
    </location>
</feature>
<reference key="1">
    <citation type="journal article" date="1999" name="Nat. Genet.">
        <title>Comparative genomes of Chlamydia pneumoniae and C. trachomatis.</title>
        <authorList>
            <person name="Kalman S."/>
            <person name="Mitchell W.P."/>
            <person name="Marathe R."/>
            <person name="Lammel C.J."/>
            <person name="Fan J."/>
            <person name="Hyman R.W."/>
            <person name="Olinger L."/>
            <person name="Grimwood J."/>
            <person name="Davis R.W."/>
            <person name="Stephens R.S."/>
        </authorList>
    </citation>
    <scope>NUCLEOTIDE SEQUENCE [LARGE SCALE GENOMIC DNA]</scope>
    <source>
        <strain>CWL029</strain>
    </source>
</reference>
<reference key="2">
    <citation type="journal article" date="2000" name="Nucleic Acids Res.">
        <title>Genome sequences of Chlamydia trachomatis MoPn and Chlamydia pneumoniae AR39.</title>
        <authorList>
            <person name="Read T.D."/>
            <person name="Brunham R.C."/>
            <person name="Shen C."/>
            <person name="Gill S.R."/>
            <person name="Heidelberg J.F."/>
            <person name="White O."/>
            <person name="Hickey E.K."/>
            <person name="Peterson J.D."/>
            <person name="Utterback T.R."/>
            <person name="Berry K.J."/>
            <person name="Bass S."/>
            <person name="Linher K.D."/>
            <person name="Weidman J.F."/>
            <person name="Khouri H.M."/>
            <person name="Craven B."/>
            <person name="Bowman C."/>
            <person name="Dodson R.J."/>
            <person name="Gwinn M.L."/>
            <person name="Nelson W.C."/>
            <person name="DeBoy R.T."/>
            <person name="Kolonay J.F."/>
            <person name="McClarty G."/>
            <person name="Salzberg S.L."/>
            <person name="Eisen J.A."/>
            <person name="Fraser C.M."/>
        </authorList>
    </citation>
    <scope>NUCLEOTIDE SEQUENCE [LARGE SCALE GENOMIC DNA]</scope>
    <source>
        <strain>AR39</strain>
    </source>
</reference>
<reference key="3">
    <citation type="journal article" date="2000" name="Nucleic Acids Res.">
        <title>Comparison of whole genome sequences of Chlamydia pneumoniae J138 from Japan and CWL029 from USA.</title>
        <authorList>
            <person name="Shirai M."/>
            <person name="Hirakawa H."/>
            <person name="Kimoto M."/>
            <person name="Tabuchi M."/>
            <person name="Kishi F."/>
            <person name="Ouchi K."/>
            <person name="Shiba T."/>
            <person name="Ishii K."/>
            <person name="Hattori M."/>
            <person name="Kuhara S."/>
            <person name="Nakazawa T."/>
        </authorList>
    </citation>
    <scope>NUCLEOTIDE SEQUENCE [LARGE SCALE GENOMIC DNA]</scope>
    <source>
        <strain>J138</strain>
    </source>
</reference>
<reference key="4">
    <citation type="submission" date="2002-05" db="EMBL/GenBank/DDBJ databases">
        <title>The genome sequence of Chlamydia pneumoniae TW183 and comparison with other Chlamydia strains based on whole genome sequence analysis.</title>
        <authorList>
            <person name="Geng M.M."/>
            <person name="Schuhmacher A."/>
            <person name="Muehldorfer I."/>
            <person name="Bensch K.W."/>
            <person name="Schaefer K.P."/>
            <person name="Schneider S."/>
            <person name="Pohl T."/>
            <person name="Essig A."/>
            <person name="Marre R."/>
            <person name="Melchers K."/>
        </authorList>
    </citation>
    <scope>NUCLEOTIDE SEQUENCE [LARGE SCALE GENOMIC DNA]</scope>
    <source>
        <strain>TW-183</strain>
    </source>
</reference>
<comment type="function">
    <text evidence="1">NQR complex catalyzes the reduction of ubiquinone-1 to ubiquinol by two successive reactions, coupled with the transport of Na(+) ions from the cytoplasm to the periplasm. NqrA to NqrE are probably involved in the second step, the conversion of ubisemiquinone to ubiquinol.</text>
</comment>
<comment type="catalytic activity">
    <reaction evidence="1">
        <text>a ubiquinone + n Na(+)(in) + NADH + H(+) = a ubiquinol + n Na(+)(out) + NAD(+)</text>
        <dbReference type="Rhea" id="RHEA:47748"/>
        <dbReference type="Rhea" id="RHEA-COMP:9565"/>
        <dbReference type="Rhea" id="RHEA-COMP:9566"/>
        <dbReference type="ChEBI" id="CHEBI:15378"/>
        <dbReference type="ChEBI" id="CHEBI:16389"/>
        <dbReference type="ChEBI" id="CHEBI:17976"/>
        <dbReference type="ChEBI" id="CHEBI:29101"/>
        <dbReference type="ChEBI" id="CHEBI:57540"/>
        <dbReference type="ChEBI" id="CHEBI:57945"/>
        <dbReference type="EC" id="7.2.1.1"/>
    </reaction>
</comment>
<comment type="cofactor">
    <cofactor evidence="1">
        <name>FMN</name>
        <dbReference type="ChEBI" id="CHEBI:58210"/>
    </cofactor>
</comment>
<comment type="subunit">
    <text evidence="1">Composed of six subunits; NqrA, NqrB, NqrC, NqrD, NqrE and NqrF.</text>
</comment>
<comment type="subcellular location">
    <subcellularLocation>
        <location evidence="1">Cell inner membrane</location>
        <topology evidence="1">Multi-pass membrane protein</topology>
    </subcellularLocation>
</comment>
<comment type="similarity">
    <text evidence="1">Belongs to the NqrB/RnfD family.</text>
</comment>
<gene>
    <name evidence="1" type="primary">nqrB</name>
    <name type="synonym">nqr2</name>
    <name type="ordered locus">CPn_0427</name>
    <name type="ordered locus">CP_0326</name>
    <name type="ordered locus">CpB0443</name>
</gene>
<proteinExistence type="inferred from homology"/>
<organism>
    <name type="scientific">Chlamydia pneumoniae</name>
    <name type="common">Chlamydophila pneumoniae</name>
    <dbReference type="NCBI Taxonomy" id="83558"/>
    <lineage>
        <taxon>Bacteria</taxon>
        <taxon>Pseudomonadati</taxon>
        <taxon>Chlamydiota</taxon>
        <taxon>Chlamydiia</taxon>
        <taxon>Chlamydiales</taxon>
        <taxon>Chlamydiaceae</taxon>
        <taxon>Chlamydia/Chlamydophila group</taxon>
        <taxon>Chlamydia</taxon>
    </lineage>
</organism>
<dbReference type="EC" id="7.2.1.1" evidence="1"/>
<dbReference type="EMBL" id="AE001363">
    <property type="protein sequence ID" value="AAD18571.1"/>
    <property type="molecule type" value="Genomic_DNA"/>
</dbReference>
<dbReference type="EMBL" id="AE002161">
    <property type="protein sequence ID" value="AAF38181.1"/>
    <property type="molecule type" value="Genomic_DNA"/>
</dbReference>
<dbReference type="EMBL" id="BA000008">
    <property type="protein sequence ID" value="BAA98635.1"/>
    <property type="molecule type" value="Genomic_DNA"/>
</dbReference>
<dbReference type="EMBL" id="AE009440">
    <property type="protein sequence ID" value="AAP98374.1"/>
    <property type="molecule type" value="Genomic_DNA"/>
</dbReference>
<dbReference type="PIR" id="A86544">
    <property type="entry name" value="A86544"/>
</dbReference>
<dbReference type="PIR" id="E72078">
    <property type="entry name" value="E72078"/>
</dbReference>
<dbReference type="RefSeq" id="NP_224627.1">
    <property type="nucleotide sequence ID" value="NC_000922.1"/>
</dbReference>
<dbReference type="RefSeq" id="WP_010883070.1">
    <property type="nucleotide sequence ID" value="NZ_LN847257.1"/>
</dbReference>
<dbReference type="SMR" id="Q9Z8B6"/>
<dbReference type="STRING" id="406984.CPK_ORF00939"/>
<dbReference type="GeneID" id="45050474"/>
<dbReference type="KEGG" id="cpa:CP_0326"/>
<dbReference type="KEGG" id="cpj:nqr2"/>
<dbReference type="KEGG" id="cpn:CPn_0427"/>
<dbReference type="KEGG" id="cpt:CpB0443"/>
<dbReference type="PATRIC" id="fig|115713.3.peg.474"/>
<dbReference type="eggNOG" id="COG1805">
    <property type="taxonomic scope" value="Bacteria"/>
</dbReference>
<dbReference type="HOGENOM" id="CLU_042020_1_1_0"/>
<dbReference type="OrthoDB" id="9776359at2"/>
<dbReference type="Proteomes" id="UP000000583">
    <property type="component" value="Chromosome"/>
</dbReference>
<dbReference type="Proteomes" id="UP000000801">
    <property type="component" value="Chromosome"/>
</dbReference>
<dbReference type="GO" id="GO:0005886">
    <property type="term" value="C:plasma membrane"/>
    <property type="evidence" value="ECO:0007669"/>
    <property type="project" value="UniProtKB-SubCell"/>
</dbReference>
<dbReference type="GO" id="GO:0010181">
    <property type="term" value="F:FMN binding"/>
    <property type="evidence" value="ECO:0007669"/>
    <property type="project" value="InterPro"/>
</dbReference>
<dbReference type="GO" id="GO:0016655">
    <property type="term" value="F:oxidoreductase activity, acting on NAD(P)H, quinone or similar compound as acceptor"/>
    <property type="evidence" value="ECO:0007669"/>
    <property type="project" value="UniProtKB-UniRule"/>
</dbReference>
<dbReference type="GO" id="GO:0022904">
    <property type="term" value="P:respiratory electron transport chain"/>
    <property type="evidence" value="ECO:0007669"/>
    <property type="project" value="InterPro"/>
</dbReference>
<dbReference type="GO" id="GO:0006814">
    <property type="term" value="P:sodium ion transport"/>
    <property type="evidence" value="ECO:0007669"/>
    <property type="project" value="UniProtKB-UniRule"/>
</dbReference>
<dbReference type="GO" id="GO:0055085">
    <property type="term" value="P:transmembrane transport"/>
    <property type="evidence" value="ECO:0007669"/>
    <property type="project" value="InterPro"/>
</dbReference>
<dbReference type="HAMAP" id="MF_00426">
    <property type="entry name" value="NqrB"/>
    <property type="match status" value="1"/>
</dbReference>
<dbReference type="InterPro" id="IPR010966">
    <property type="entry name" value="NqrB"/>
</dbReference>
<dbReference type="InterPro" id="IPR004338">
    <property type="entry name" value="NqrB/RnfD"/>
</dbReference>
<dbReference type="NCBIfam" id="TIGR01937">
    <property type="entry name" value="nqrB"/>
    <property type="match status" value="1"/>
</dbReference>
<dbReference type="NCBIfam" id="NF002181">
    <property type="entry name" value="PRK01024.1"/>
    <property type="match status" value="1"/>
</dbReference>
<dbReference type="PANTHER" id="PTHR30578">
    <property type="entry name" value="ELECTRON TRANSPORT COMPLEX PROTEIN RNFD"/>
    <property type="match status" value="1"/>
</dbReference>
<dbReference type="PANTHER" id="PTHR30578:SF1">
    <property type="entry name" value="NA(+)-TRANSLOCATING NADH-QUINONE REDUCTASE SUBUNIT B"/>
    <property type="match status" value="1"/>
</dbReference>
<dbReference type="Pfam" id="PF03116">
    <property type="entry name" value="NQR2_RnfD_RnfE"/>
    <property type="match status" value="1"/>
</dbReference>
<evidence type="ECO:0000255" key="1">
    <source>
        <dbReference type="HAMAP-Rule" id="MF_00426"/>
    </source>
</evidence>
<accession>Q9Z8B6</accession>
<protein>
    <recommendedName>
        <fullName evidence="1">Na(+)-translocating NADH-quinone reductase subunit B</fullName>
        <shortName evidence="1">Na(+)-NQR subunit B</shortName>
        <shortName evidence="1">Na(+)-translocating NQR subunit B</shortName>
        <ecNumber evidence="1">7.2.1.1</ecNumber>
    </recommendedName>
    <alternativeName>
        <fullName evidence="1">NQR complex subunit B</fullName>
    </alternativeName>
    <alternativeName>
        <fullName evidence="1">NQR-1 subunit B</fullName>
    </alternativeName>
</protein>
<name>NQRB_CHLPN</name>
<keyword id="KW-0997">Cell inner membrane</keyword>
<keyword id="KW-1003">Cell membrane</keyword>
<keyword id="KW-0285">Flavoprotein</keyword>
<keyword id="KW-0288">FMN</keyword>
<keyword id="KW-0406">Ion transport</keyword>
<keyword id="KW-0472">Membrane</keyword>
<keyword id="KW-0520">NAD</keyword>
<keyword id="KW-0597">Phosphoprotein</keyword>
<keyword id="KW-0915">Sodium</keyword>
<keyword id="KW-0739">Sodium transport</keyword>
<keyword id="KW-1278">Translocase</keyword>
<keyword id="KW-0812">Transmembrane</keyword>
<keyword id="KW-1133">Transmembrane helix</keyword>
<keyword id="KW-0813">Transport</keyword>
<keyword id="KW-0830">Ubiquinone</keyword>